<proteinExistence type="inferred from homology"/>
<protein>
    <recommendedName>
        <fullName>Phosphoserine aminotransferase</fullName>
        <ecNumber>2.6.1.52</ecNumber>
    </recommendedName>
    <alternativeName>
        <fullName>Phosphohydroxythreonine aminotransferase</fullName>
        <shortName>PSAT</shortName>
    </alternativeName>
</protein>
<feature type="chain" id="PRO_0000426826" description="Phosphoserine aminotransferase">
    <location>
        <begin position="1"/>
        <end position="376"/>
    </location>
</feature>
<feature type="binding site" evidence="1">
    <location>
        <position position="50"/>
    </location>
    <ligand>
        <name>L-glutamate</name>
        <dbReference type="ChEBI" id="CHEBI:29985"/>
    </ligand>
</feature>
<feature type="binding site" evidence="1">
    <location>
        <begin position="84"/>
        <end position="85"/>
    </location>
    <ligand>
        <name>pyridoxal 5'-phosphate</name>
        <dbReference type="ChEBI" id="CHEBI:597326"/>
    </ligand>
</feature>
<feature type="binding site" evidence="1">
    <location>
        <position position="108"/>
    </location>
    <ligand>
        <name>pyridoxal 5'-phosphate</name>
        <dbReference type="ChEBI" id="CHEBI:597326"/>
    </ligand>
</feature>
<feature type="binding site" evidence="1">
    <location>
        <position position="154"/>
    </location>
    <ligand>
        <name>pyridoxal 5'-phosphate</name>
        <dbReference type="ChEBI" id="CHEBI:597326"/>
    </ligand>
</feature>
<feature type="binding site" evidence="1">
    <location>
        <position position="176"/>
    </location>
    <ligand>
        <name>pyridoxal 5'-phosphate</name>
        <dbReference type="ChEBI" id="CHEBI:597326"/>
    </ligand>
</feature>
<feature type="binding site" evidence="1">
    <location>
        <position position="199"/>
    </location>
    <ligand>
        <name>pyridoxal 5'-phosphate</name>
        <dbReference type="ChEBI" id="CHEBI:597326"/>
    </ligand>
</feature>
<feature type="binding site" evidence="1">
    <location>
        <begin position="251"/>
        <end position="252"/>
    </location>
    <ligand>
        <name>pyridoxal 5'-phosphate</name>
        <dbReference type="ChEBI" id="CHEBI:597326"/>
    </ligand>
</feature>
<feature type="modified residue" description="N6-(pyridoxal phosphate)lysine" evidence="1">
    <location>
        <position position="200"/>
    </location>
</feature>
<evidence type="ECO:0000250" key="1"/>
<evidence type="ECO:0000305" key="2"/>
<gene>
    <name type="primary">serC</name>
    <name type="ordered locus">MT0907</name>
</gene>
<reference key="1">
    <citation type="journal article" date="2002" name="J. Bacteriol.">
        <title>Whole-genome comparison of Mycobacterium tuberculosis clinical and laboratory strains.</title>
        <authorList>
            <person name="Fleischmann R.D."/>
            <person name="Alland D."/>
            <person name="Eisen J.A."/>
            <person name="Carpenter L."/>
            <person name="White O."/>
            <person name="Peterson J.D."/>
            <person name="DeBoy R.T."/>
            <person name="Dodson R.J."/>
            <person name="Gwinn M.L."/>
            <person name="Haft D.H."/>
            <person name="Hickey E.K."/>
            <person name="Kolonay J.F."/>
            <person name="Nelson W.C."/>
            <person name="Umayam L.A."/>
            <person name="Ermolaeva M.D."/>
            <person name="Salzberg S.L."/>
            <person name="Delcher A."/>
            <person name="Utterback T.R."/>
            <person name="Weidman J.F."/>
            <person name="Khouri H.M."/>
            <person name="Gill J."/>
            <person name="Mikula A."/>
            <person name="Bishai W."/>
            <person name="Jacobs W.R. Jr."/>
            <person name="Venter J.C."/>
            <person name="Fraser C.M."/>
        </authorList>
    </citation>
    <scope>NUCLEOTIDE SEQUENCE [LARGE SCALE GENOMIC DNA]</scope>
    <source>
        <strain>CDC 1551 / Oshkosh</strain>
    </source>
</reference>
<name>SERC_MYCTO</name>
<organism>
    <name type="scientific">Mycobacterium tuberculosis (strain CDC 1551 / Oshkosh)</name>
    <dbReference type="NCBI Taxonomy" id="83331"/>
    <lineage>
        <taxon>Bacteria</taxon>
        <taxon>Bacillati</taxon>
        <taxon>Actinomycetota</taxon>
        <taxon>Actinomycetes</taxon>
        <taxon>Mycobacteriales</taxon>
        <taxon>Mycobacteriaceae</taxon>
        <taxon>Mycobacterium</taxon>
        <taxon>Mycobacterium tuberculosis complex</taxon>
    </lineage>
</organism>
<sequence>MADQLTPHLEIPTAIKPRDGRFGSGPSKVRLEQLQTLTTTAAALFGTSHRQAPVKNLVGRVRSGLAELFSLPDGYEVILGNGGATAFWDAAAFGLIDKRSLHLTYGEFSAKFASAVSKNPFVGEPIIITSDPGSAPEPQTDPSVDVIAWAHNETSTGVAVAVRRPEGSDDALVVIDATSGAGGLPVDIAETDAYYFAPQKNFASDGGLWLAIMSPAALSRIEAIAATGRWVPDFLSLPIAVENSLKNQTYNTPAIATLALLAEQIDWLVGNGGLDWAVKRTADSSQRLYSWAQERPYTTPFVTDPGLRSQVVGTIDFVDDVDAGTVAKILRANGIVDTEPYRKLGRNQLRVAMFPAVEPDDVSALTECVDWVVERL</sequence>
<keyword id="KW-0028">Amino-acid biosynthesis</keyword>
<keyword id="KW-0032">Aminotransferase</keyword>
<keyword id="KW-0963">Cytoplasm</keyword>
<keyword id="KW-0663">Pyridoxal phosphate</keyword>
<keyword id="KW-0664">Pyridoxine biosynthesis</keyword>
<keyword id="KW-1185">Reference proteome</keyword>
<keyword id="KW-0718">Serine biosynthesis</keyword>
<keyword id="KW-0808">Transferase</keyword>
<comment type="function">
    <text evidence="1">Catalyzes the reversible conversion of 3-phosphohydroxypyruvate to phosphoserine and of 3-hydroxy-2-oxo-4-phosphonooxybutanoate to phosphohydroxythreonine.</text>
</comment>
<comment type="catalytic activity">
    <reaction>
        <text>O-phospho-L-serine + 2-oxoglutarate = 3-phosphooxypyruvate + L-glutamate</text>
        <dbReference type="Rhea" id="RHEA:14329"/>
        <dbReference type="ChEBI" id="CHEBI:16810"/>
        <dbReference type="ChEBI" id="CHEBI:18110"/>
        <dbReference type="ChEBI" id="CHEBI:29985"/>
        <dbReference type="ChEBI" id="CHEBI:57524"/>
        <dbReference type="EC" id="2.6.1.52"/>
    </reaction>
</comment>
<comment type="catalytic activity">
    <reaction>
        <text>4-(phosphooxy)-L-threonine + 2-oxoglutarate = (R)-3-hydroxy-2-oxo-4-phosphooxybutanoate + L-glutamate</text>
        <dbReference type="Rhea" id="RHEA:16573"/>
        <dbReference type="ChEBI" id="CHEBI:16810"/>
        <dbReference type="ChEBI" id="CHEBI:29985"/>
        <dbReference type="ChEBI" id="CHEBI:58452"/>
        <dbReference type="ChEBI" id="CHEBI:58538"/>
        <dbReference type="EC" id="2.6.1.52"/>
    </reaction>
</comment>
<comment type="cofactor">
    <cofactor evidence="1">
        <name>pyridoxal 5'-phosphate</name>
        <dbReference type="ChEBI" id="CHEBI:597326"/>
    </cofactor>
    <text evidence="1">Binds 1 pyridoxal phosphate per subunit.</text>
</comment>
<comment type="pathway">
    <text>Amino-acid biosynthesis; L-serine biosynthesis; L-serine from 3-phospho-D-glycerate: step 2/3.</text>
</comment>
<comment type="pathway">
    <text>Cofactor biosynthesis; pyridoxine 5'-phosphate biosynthesis; pyridoxine 5'-phosphate from D-erythrose 4-phosphate: step 3/5.</text>
</comment>
<comment type="subunit">
    <text evidence="1">Homodimer.</text>
</comment>
<comment type="subcellular location">
    <subcellularLocation>
        <location evidence="1">Cytoplasm</location>
    </subcellularLocation>
</comment>
<comment type="similarity">
    <text evidence="2">Belongs to the class-V pyridoxal-phosphate-dependent aminotransferase family. SerC subfamily.</text>
</comment>
<accession>P9WQ72</accession>
<accession>L0T803</accession>
<accession>P63514</accession>
<accession>Q10534</accession>
<dbReference type="EC" id="2.6.1.52"/>
<dbReference type="EMBL" id="AE000516">
    <property type="protein sequence ID" value="AAK45149.1"/>
    <property type="molecule type" value="Genomic_DNA"/>
</dbReference>
<dbReference type="PIR" id="A70781">
    <property type="entry name" value="A70781"/>
</dbReference>
<dbReference type="RefSeq" id="WP_003404623.1">
    <property type="nucleotide sequence ID" value="NZ_KK341227.1"/>
</dbReference>
<dbReference type="SMR" id="P9WQ72"/>
<dbReference type="KEGG" id="mtc:MT0907"/>
<dbReference type="PATRIC" id="fig|83331.31.peg.974"/>
<dbReference type="HOGENOM" id="CLU_061974_0_0_11"/>
<dbReference type="UniPathway" id="UPA00135">
    <property type="reaction ID" value="UER00197"/>
</dbReference>
<dbReference type="UniPathway" id="UPA00244">
    <property type="reaction ID" value="UER00311"/>
</dbReference>
<dbReference type="Proteomes" id="UP000001020">
    <property type="component" value="Chromosome"/>
</dbReference>
<dbReference type="GO" id="GO:0005737">
    <property type="term" value="C:cytoplasm"/>
    <property type="evidence" value="ECO:0007669"/>
    <property type="project" value="UniProtKB-SubCell"/>
</dbReference>
<dbReference type="GO" id="GO:0008453">
    <property type="term" value="F:alanine-glyoxylate transaminase activity"/>
    <property type="evidence" value="ECO:0007669"/>
    <property type="project" value="TreeGrafter"/>
</dbReference>
<dbReference type="GO" id="GO:0004760">
    <property type="term" value="F:L-serine-pyruvate transaminase activity"/>
    <property type="evidence" value="ECO:0007669"/>
    <property type="project" value="TreeGrafter"/>
</dbReference>
<dbReference type="GO" id="GO:0004648">
    <property type="term" value="F:O-phospho-L-serine:2-oxoglutarate aminotransferase activity"/>
    <property type="evidence" value="ECO:0007669"/>
    <property type="project" value="UniProtKB-UniRule"/>
</dbReference>
<dbReference type="GO" id="GO:0030170">
    <property type="term" value="F:pyridoxal phosphate binding"/>
    <property type="evidence" value="ECO:0007669"/>
    <property type="project" value="UniProtKB-UniRule"/>
</dbReference>
<dbReference type="GO" id="GO:0019265">
    <property type="term" value="P:glycine biosynthetic process, by transamination of glyoxylate"/>
    <property type="evidence" value="ECO:0007669"/>
    <property type="project" value="TreeGrafter"/>
</dbReference>
<dbReference type="GO" id="GO:0006564">
    <property type="term" value="P:L-serine biosynthetic process"/>
    <property type="evidence" value="ECO:0007669"/>
    <property type="project" value="UniProtKB-UniRule"/>
</dbReference>
<dbReference type="GO" id="GO:0008615">
    <property type="term" value="P:pyridoxine biosynthetic process"/>
    <property type="evidence" value="ECO:0007669"/>
    <property type="project" value="UniProtKB-UniRule"/>
</dbReference>
<dbReference type="FunFam" id="3.90.1150.10:FF:000084">
    <property type="entry name" value="Phosphoserine aminotransferase"/>
    <property type="match status" value="1"/>
</dbReference>
<dbReference type="Gene3D" id="3.90.1150.10">
    <property type="entry name" value="Aspartate Aminotransferase, domain 1"/>
    <property type="match status" value="1"/>
</dbReference>
<dbReference type="Gene3D" id="3.40.640.10">
    <property type="entry name" value="Type I PLP-dependent aspartate aminotransferase-like (Major domain)"/>
    <property type="match status" value="1"/>
</dbReference>
<dbReference type="HAMAP" id="MF_00160">
    <property type="entry name" value="SerC_aminotrans_5"/>
    <property type="match status" value="1"/>
</dbReference>
<dbReference type="InterPro" id="IPR000192">
    <property type="entry name" value="Aminotrans_V_dom"/>
</dbReference>
<dbReference type="InterPro" id="IPR022278">
    <property type="entry name" value="Pser_aminoTfrase"/>
</dbReference>
<dbReference type="InterPro" id="IPR006272">
    <property type="entry name" value="Pser_aminoTfrase_mycobac"/>
</dbReference>
<dbReference type="InterPro" id="IPR015424">
    <property type="entry name" value="PyrdxlP-dep_Trfase"/>
</dbReference>
<dbReference type="InterPro" id="IPR015421">
    <property type="entry name" value="PyrdxlP-dep_Trfase_major"/>
</dbReference>
<dbReference type="InterPro" id="IPR015422">
    <property type="entry name" value="PyrdxlP-dep_Trfase_small"/>
</dbReference>
<dbReference type="NCBIfam" id="TIGR01366">
    <property type="entry name" value="serC_3"/>
    <property type="match status" value="1"/>
</dbReference>
<dbReference type="PANTHER" id="PTHR21152:SF40">
    <property type="entry name" value="ALANINE--GLYOXYLATE AMINOTRANSFERASE"/>
    <property type="match status" value="1"/>
</dbReference>
<dbReference type="PANTHER" id="PTHR21152">
    <property type="entry name" value="AMINOTRANSFERASE CLASS V"/>
    <property type="match status" value="1"/>
</dbReference>
<dbReference type="Pfam" id="PF00266">
    <property type="entry name" value="Aminotran_5"/>
    <property type="match status" value="1"/>
</dbReference>
<dbReference type="PIRSF" id="PIRSF000525">
    <property type="entry name" value="SerC"/>
    <property type="match status" value="1"/>
</dbReference>
<dbReference type="SUPFAM" id="SSF53383">
    <property type="entry name" value="PLP-dependent transferases"/>
    <property type="match status" value="1"/>
</dbReference>